<gene>
    <name evidence="1" type="primary">pgl</name>
    <name type="ordered locus">ECS88_0783</name>
</gene>
<keyword id="KW-0007">Acetylation</keyword>
<keyword id="KW-0119">Carbohydrate metabolism</keyword>
<keyword id="KW-0313">Glucose metabolism</keyword>
<keyword id="KW-0378">Hydrolase</keyword>
<keyword id="KW-1185">Reference proteome</keyword>
<feature type="chain" id="PRO_1000148150" description="6-phosphogluconolactonase">
    <location>
        <begin position="1"/>
        <end position="331"/>
    </location>
</feature>
<feature type="modified residue" description="N6-acetyllysine" evidence="1">
    <location>
        <position position="287"/>
    </location>
</feature>
<proteinExistence type="inferred from homology"/>
<protein>
    <recommendedName>
        <fullName evidence="1">6-phosphogluconolactonase</fullName>
        <shortName evidence="1">6-P-gluconolactonase</shortName>
        <ecNumber evidence="1">3.1.1.31</ecNumber>
    </recommendedName>
</protein>
<comment type="function">
    <text evidence="1">Catalyzes the hydrolysis of 6-phosphogluconolactone to 6-phosphogluconate.</text>
</comment>
<comment type="catalytic activity">
    <reaction evidence="1">
        <text>6-phospho-D-glucono-1,5-lactone + H2O = 6-phospho-D-gluconate + H(+)</text>
        <dbReference type="Rhea" id="RHEA:12556"/>
        <dbReference type="ChEBI" id="CHEBI:15377"/>
        <dbReference type="ChEBI" id="CHEBI:15378"/>
        <dbReference type="ChEBI" id="CHEBI:57955"/>
        <dbReference type="ChEBI" id="CHEBI:58759"/>
        <dbReference type="EC" id="3.1.1.31"/>
    </reaction>
</comment>
<comment type="pathway">
    <text evidence="1">Carbohydrate degradation; pentose phosphate pathway; D-ribulose 5-phosphate from D-glucose 6-phosphate (oxidative stage): step 2/3.</text>
</comment>
<comment type="similarity">
    <text evidence="1">Belongs to the cycloisomerase 2 family.</text>
</comment>
<organism>
    <name type="scientific">Escherichia coli O45:K1 (strain S88 / ExPEC)</name>
    <dbReference type="NCBI Taxonomy" id="585035"/>
    <lineage>
        <taxon>Bacteria</taxon>
        <taxon>Pseudomonadati</taxon>
        <taxon>Pseudomonadota</taxon>
        <taxon>Gammaproteobacteria</taxon>
        <taxon>Enterobacterales</taxon>
        <taxon>Enterobacteriaceae</taxon>
        <taxon>Escherichia</taxon>
    </lineage>
</organism>
<sequence length="331" mass="36293">MKQTVYIASPESQQIHVWNLNHEGALTLTQVVDVPGQVQPMVVSPDKRYLYVGVRPEFRVLAYRIAPDDGALTFAAESALPGSPTHISTDHLGQFVFVGSYNAGNVSVTRLEDGLPVGVVDVVEGLDGCHSANISPDNRTLWVPALKQDRICLFTVSDDGHLVAQDPAEVTTVEGAGPRHMVFHPNEQYAYCVNELNSSVDVWELKDPHGNIECVQTLDMMPENFSDTRWAADIHITPDGRHLYACDRTASLITVFSVSEDGSVLSKEGFQPTETQPRGFNVDHSGKYLIAAGQKSHHISVYEIVGEQGLLHEKGRYAVGQGPMWVVVNAH</sequence>
<accession>B7MGM4</accession>
<evidence type="ECO:0000255" key="1">
    <source>
        <dbReference type="HAMAP-Rule" id="MF_01605"/>
    </source>
</evidence>
<reference key="1">
    <citation type="journal article" date="2009" name="PLoS Genet.">
        <title>Organised genome dynamics in the Escherichia coli species results in highly diverse adaptive paths.</title>
        <authorList>
            <person name="Touchon M."/>
            <person name="Hoede C."/>
            <person name="Tenaillon O."/>
            <person name="Barbe V."/>
            <person name="Baeriswyl S."/>
            <person name="Bidet P."/>
            <person name="Bingen E."/>
            <person name="Bonacorsi S."/>
            <person name="Bouchier C."/>
            <person name="Bouvet O."/>
            <person name="Calteau A."/>
            <person name="Chiapello H."/>
            <person name="Clermont O."/>
            <person name="Cruveiller S."/>
            <person name="Danchin A."/>
            <person name="Diard M."/>
            <person name="Dossat C."/>
            <person name="Karoui M.E."/>
            <person name="Frapy E."/>
            <person name="Garry L."/>
            <person name="Ghigo J.M."/>
            <person name="Gilles A.M."/>
            <person name="Johnson J."/>
            <person name="Le Bouguenec C."/>
            <person name="Lescat M."/>
            <person name="Mangenot S."/>
            <person name="Martinez-Jehanne V."/>
            <person name="Matic I."/>
            <person name="Nassif X."/>
            <person name="Oztas S."/>
            <person name="Petit M.A."/>
            <person name="Pichon C."/>
            <person name="Rouy Z."/>
            <person name="Ruf C.S."/>
            <person name="Schneider D."/>
            <person name="Tourret J."/>
            <person name="Vacherie B."/>
            <person name="Vallenet D."/>
            <person name="Medigue C."/>
            <person name="Rocha E.P.C."/>
            <person name="Denamur E."/>
        </authorList>
    </citation>
    <scope>NUCLEOTIDE SEQUENCE [LARGE SCALE GENOMIC DNA]</scope>
    <source>
        <strain>S88 / ExPEC</strain>
    </source>
</reference>
<name>6PGL_ECO45</name>
<dbReference type="EC" id="3.1.1.31" evidence="1"/>
<dbReference type="EMBL" id="CU928161">
    <property type="protein sequence ID" value="CAR02122.1"/>
    <property type="molecule type" value="Genomic_DNA"/>
</dbReference>
<dbReference type="RefSeq" id="WP_000815414.1">
    <property type="nucleotide sequence ID" value="NC_011742.1"/>
</dbReference>
<dbReference type="SMR" id="B7MGM4"/>
<dbReference type="KEGG" id="ecz:ECS88_0783"/>
<dbReference type="HOGENOM" id="CLU_038716_2_0_6"/>
<dbReference type="UniPathway" id="UPA00115">
    <property type="reaction ID" value="UER00409"/>
</dbReference>
<dbReference type="Proteomes" id="UP000000747">
    <property type="component" value="Chromosome"/>
</dbReference>
<dbReference type="GO" id="GO:0005829">
    <property type="term" value="C:cytosol"/>
    <property type="evidence" value="ECO:0007669"/>
    <property type="project" value="TreeGrafter"/>
</dbReference>
<dbReference type="GO" id="GO:0017057">
    <property type="term" value="F:6-phosphogluconolactonase activity"/>
    <property type="evidence" value="ECO:0007669"/>
    <property type="project" value="UniProtKB-UniRule"/>
</dbReference>
<dbReference type="GO" id="GO:0006006">
    <property type="term" value="P:glucose metabolic process"/>
    <property type="evidence" value="ECO:0007669"/>
    <property type="project" value="UniProtKB-KW"/>
</dbReference>
<dbReference type="GO" id="GO:0009051">
    <property type="term" value="P:pentose-phosphate shunt, oxidative branch"/>
    <property type="evidence" value="ECO:0007669"/>
    <property type="project" value="UniProtKB-UniRule"/>
</dbReference>
<dbReference type="FunFam" id="2.130.10.10:FF:000051">
    <property type="entry name" value="6-phosphogluconolactonase"/>
    <property type="match status" value="1"/>
</dbReference>
<dbReference type="Gene3D" id="2.130.10.10">
    <property type="entry name" value="YVTN repeat-like/Quinoprotein amine dehydrogenase"/>
    <property type="match status" value="1"/>
</dbReference>
<dbReference type="HAMAP" id="MF_01605">
    <property type="entry name" value="6P_gluconolactonase"/>
    <property type="match status" value="1"/>
</dbReference>
<dbReference type="InterPro" id="IPR022528">
    <property type="entry name" value="6-phosphogluconolactonase_YbhE"/>
</dbReference>
<dbReference type="InterPro" id="IPR050282">
    <property type="entry name" value="Cycloisomerase_2"/>
</dbReference>
<dbReference type="InterPro" id="IPR019405">
    <property type="entry name" value="Lactonase_7-beta_prop"/>
</dbReference>
<dbReference type="InterPro" id="IPR011045">
    <property type="entry name" value="N2O_reductase_N"/>
</dbReference>
<dbReference type="InterPro" id="IPR015943">
    <property type="entry name" value="WD40/YVTN_repeat-like_dom_sf"/>
</dbReference>
<dbReference type="NCBIfam" id="NF008258">
    <property type="entry name" value="PRK11028.1"/>
    <property type="match status" value="1"/>
</dbReference>
<dbReference type="PANTHER" id="PTHR30344:SF1">
    <property type="entry name" value="6-PHOSPHOGLUCONOLACTONASE"/>
    <property type="match status" value="1"/>
</dbReference>
<dbReference type="PANTHER" id="PTHR30344">
    <property type="entry name" value="6-PHOSPHOGLUCONOLACTONASE-RELATED"/>
    <property type="match status" value="1"/>
</dbReference>
<dbReference type="Pfam" id="PF10282">
    <property type="entry name" value="Lactonase"/>
    <property type="match status" value="1"/>
</dbReference>
<dbReference type="SUPFAM" id="SSF50974">
    <property type="entry name" value="Nitrous oxide reductase, N-terminal domain"/>
    <property type="match status" value="1"/>
</dbReference>